<comment type="function">
    <text evidence="1">Catalyzes the irreversible NADPH-dependent deamination of GMP to IMP. It functions in the conversion of nucleobase, nucleoside and nucleotide derivatives of G to A nucleotides, and in maintaining the intracellular balance of A and G nucleotides.</text>
</comment>
<comment type="catalytic activity">
    <reaction evidence="1">
        <text>IMP + NH4(+) + NADP(+) = GMP + NADPH + 2 H(+)</text>
        <dbReference type="Rhea" id="RHEA:17185"/>
        <dbReference type="ChEBI" id="CHEBI:15378"/>
        <dbReference type="ChEBI" id="CHEBI:28938"/>
        <dbReference type="ChEBI" id="CHEBI:57783"/>
        <dbReference type="ChEBI" id="CHEBI:58053"/>
        <dbReference type="ChEBI" id="CHEBI:58115"/>
        <dbReference type="ChEBI" id="CHEBI:58349"/>
        <dbReference type="EC" id="1.7.1.7"/>
    </reaction>
</comment>
<comment type="subunit">
    <text evidence="1">Homotetramer.</text>
</comment>
<comment type="similarity">
    <text evidence="1">Belongs to the IMPDH/GMPR family. GuaC type 1 subfamily.</text>
</comment>
<organism>
    <name type="scientific">Escherichia coli O6:K15:H31 (strain 536 / UPEC)</name>
    <dbReference type="NCBI Taxonomy" id="362663"/>
    <lineage>
        <taxon>Bacteria</taxon>
        <taxon>Pseudomonadati</taxon>
        <taxon>Pseudomonadota</taxon>
        <taxon>Gammaproteobacteria</taxon>
        <taxon>Enterobacterales</taxon>
        <taxon>Enterobacteriaceae</taxon>
        <taxon>Escherichia</taxon>
    </lineage>
</organism>
<name>GUAC_ECOL5</name>
<keyword id="KW-0479">Metal-binding</keyword>
<keyword id="KW-0521">NADP</keyword>
<keyword id="KW-0560">Oxidoreductase</keyword>
<keyword id="KW-0630">Potassium</keyword>
<evidence type="ECO:0000255" key="1">
    <source>
        <dbReference type="HAMAP-Rule" id="MF_00596"/>
    </source>
</evidence>
<protein>
    <recommendedName>
        <fullName evidence="1">GMP reductase</fullName>
        <ecNumber evidence="1">1.7.1.7</ecNumber>
    </recommendedName>
    <alternativeName>
        <fullName evidence="1">Guanosine 5'-monophosphate oxidoreductase</fullName>
        <shortName evidence="1">Guanosine monophosphate reductase</shortName>
    </alternativeName>
</protein>
<reference key="1">
    <citation type="journal article" date="2006" name="Mol. Microbiol.">
        <title>Role of pathogenicity island-associated integrases in the genome plasticity of uropathogenic Escherichia coli strain 536.</title>
        <authorList>
            <person name="Hochhut B."/>
            <person name="Wilde C."/>
            <person name="Balling G."/>
            <person name="Middendorf B."/>
            <person name="Dobrindt U."/>
            <person name="Brzuszkiewicz E."/>
            <person name="Gottschalk G."/>
            <person name="Carniel E."/>
            <person name="Hacker J."/>
        </authorList>
    </citation>
    <scope>NUCLEOTIDE SEQUENCE [LARGE SCALE GENOMIC DNA]</scope>
    <source>
        <strain>536 / UPEC</strain>
    </source>
</reference>
<accession>Q0TLN6</accession>
<dbReference type="EC" id="1.7.1.7" evidence="1"/>
<dbReference type="EMBL" id="CP000247">
    <property type="protein sequence ID" value="ABG68145.1"/>
    <property type="molecule type" value="Genomic_DNA"/>
</dbReference>
<dbReference type="RefSeq" id="WP_001217338.1">
    <property type="nucleotide sequence ID" value="NC_008253.1"/>
</dbReference>
<dbReference type="SMR" id="Q0TLN6"/>
<dbReference type="GeneID" id="93777331"/>
<dbReference type="KEGG" id="ecp:ECP_0105"/>
<dbReference type="HOGENOM" id="CLU_022552_5_3_6"/>
<dbReference type="Proteomes" id="UP000009182">
    <property type="component" value="Chromosome"/>
</dbReference>
<dbReference type="GO" id="GO:0005829">
    <property type="term" value="C:cytosol"/>
    <property type="evidence" value="ECO:0007669"/>
    <property type="project" value="TreeGrafter"/>
</dbReference>
<dbReference type="GO" id="GO:1902560">
    <property type="term" value="C:GMP reductase complex"/>
    <property type="evidence" value="ECO:0007669"/>
    <property type="project" value="InterPro"/>
</dbReference>
<dbReference type="GO" id="GO:0003920">
    <property type="term" value="F:GMP reductase activity"/>
    <property type="evidence" value="ECO:0007669"/>
    <property type="project" value="UniProtKB-UniRule"/>
</dbReference>
<dbReference type="GO" id="GO:0046872">
    <property type="term" value="F:metal ion binding"/>
    <property type="evidence" value="ECO:0007669"/>
    <property type="project" value="UniProtKB-KW"/>
</dbReference>
<dbReference type="GO" id="GO:0006163">
    <property type="term" value="P:purine nucleotide metabolic process"/>
    <property type="evidence" value="ECO:0007669"/>
    <property type="project" value="UniProtKB-UniRule"/>
</dbReference>
<dbReference type="CDD" id="cd00381">
    <property type="entry name" value="IMPDH"/>
    <property type="match status" value="1"/>
</dbReference>
<dbReference type="FunFam" id="3.20.20.70:FF:000012">
    <property type="entry name" value="GMP reductase"/>
    <property type="match status" value="1"/>
</dbReference>
<dbReference type="Gene3D" id="3.20.20.70">
    <property type="entry name" value="Aldolase class I"/>
    <property type="match status" value="1"/>
</dbReference>
<dbReference type="HAMAP" id="MF_00596">
    <property type="entry name" value="GMP_reduct_type1"/>
    <property type="match status" value="1"/>
</dbReference>
<dbReference type="InterPro" id="IPR013785">
    <property type="entry name" value="Aldolase_TIM"/>
</dbReference>
<dbReference type="InterPro" id="IPR050139">
    <property type="entry name" value="GMP_reductase"/>
</dbReference>
<dbReference type="InterPro" id="IPR005993">
    <property type="entry name" value="GMPR"/>
</dbReference>
<dbReference type="InterPro" id="IPR015875">
    <property type="entry name" value="IMP_DH/GMP_Rdtase_CS"/>
</dbReference>
<dbReference type="InterPro" id="IPR001093">
    <property type="entry name" value="IMP_DH_GMPRt"/>
</dbReference>
<dbReference type="NCBIfam" id="TIGR01305">
    <property type="entry name" value="GMP_reduct_1"/>
    <property type="match status" value="1"/>
</dbReference>
<dbReference type="NCBIfam" id="NF003470">
    <property type="entry name" value="PRK05096.1"/>
    <property type="match status" value="1"/>
</dbReference>
<dbReference type="PANTHER" id="PTHR43170">
    <property type="entry name" value="GMP REDUCTASE"/>
    <property type="match status" value="1"/>
</dbReference>
<dbReference type="PANTHER" id="PTHR43170:SF5">
    <property type="entry name" value="GMP REDUCTASE"/>
    <property type="match status" value="1"/>
</dbReference>
<dbReference type="Pfam" id="PF00478">
    <property type="entry name" value="IMPDH"/>
    <property type="match status" value="1"/>
</dbReference>
<dbReference type="PIRSF" id="PIRSF000235">
    <property type="entry name" value="GMP_reductase"/>
    <property type="match status" value="1"/>
</dbReference>
<dbReference type="SMART" id="SM01240">
    <property type="entry name" value="IMPDH"/>
    <property type="match status" value="1"/>
</dbReference>
<dbReference type="SUPFAM" id="SSF51412">
    <property type="entry name" value="Inosine monophosphate dehydrogenase (IMPDH)"/>
    <property type="match status" value="1"/>
</dbReference>
<dbReference type="PROSITE" id="PS00487">
    <property type="entry name" value="IMP_DH_GMP_RED"/>
    <property type="match status" value="1"/>
</dbReference>
<gene>
    <name evidence="1" type="primary">guaC</name>
    <name type="ordered locus">ECP_0105</name>
</gene>
<feature type="chain" id="PRO_1000025612" description="GMP reductase">
    <location>
        <begin position="1"/>
        <end position="347"/>
    </location>
</feature>
<feature type="active site" description="Thioimidate intermediate" evidence="1">
    <location>
        <position position="186"/>
    </location>
</feature>
<feature type="binding site" evidence="1">
    <location>
        <begin position="108"/>
        <end position="131"/>
    </location>
    <ligand>
        <name>NADP(+)</name>
        <dbReference type="ChEBI" id="CHEBI:58349"/>
    </ligand>
</feature>
<feature type="binding site" evidence="1">
    <location>
        <position position="181"/>
    </location>
    <ligand>
        <name>K(+)</name>
        <dbReference type="ChEBI" id="CHEBI:29103"/>
    </ligand>
</feature>
<feature type="binding site" evidence="1">
    <location>
        <position position="183"/>
    </location>
    <ligand>
        <name>K(+)</name>
        <dbReference type="ChEBI" id="CHEBI:29103"/>
    </ligand>
</feature>
<feature type="binding site" evidence="1">
    <location>
        <begin position="216"/>
        <end position="239"/>
    </location>
    <ligand>
        <name>NADP(+)</name>
        <dbReference type="ChEBI" id="CHEBI:58349"/>
    </ligand>
</feature>
<sequence>MRIEEDLKLGFKDVLIRPKRSTLKSRSDVELERQFTFKHSGQSWSGVPIIAANMDTVGTFSMASALASFDILTAVHKHYSVEEWQAFINNSSADVLKHVMVSTGTSDADFEKTKQILDLNPALNFVCIDVANGYSEHFVQFVAKAREAWPTKTICAGNVVTGEMCEELILSGADIVKVGIGPGSVCTTRVKTGVGYPQLSAVIECADAAHGLGGMIVSDGGCTTPGDVAKAFGGGADFVMLGGMLAGHEESGGRIVEENGEKFMLFYGMSSESAMKRHVGGVAEYRAAEGKTVKLPLRGPVENTARDILGGLRSACTYVGASRLKELTKRTTFIRVQEQENRIFNNL</sequence>
<proteinExistence type="inferred from homology"/>